<organism>
    <name type="scientific">Canis lupus familiaris</name>
    <name type="common">Dog</name>
    <name type="synonym">Canis familiaris</name>
    <dbReference type="NCBI Taxonomy" id="9615"/>
    <lineage>
        <taxon>Eukaryota</taxon>
        <taxon>Metazoa</taxon>
        <taxon>Chordata</taxon>
        <taxon>Craniata</taxon>
        <taxon>Vertebrata</taxon>
        <taxon>Euteleostomi</taxon>
        <taxon>Mammalia</taxon>
        <taxon>Eutheria</taxon>
        <taxon>Laurasiatheria</taxon>
        <taxon>Carnivora</taxon>
        <taxon>Caniformia</taxon>
        <taxon>Canidae</taxon>
        <taxon>Canis</taxon>
    </lineage>
</organism>
<accession>Q8WMX5</accession>
<evidence type="ECO:0000250" key="1">
    <source>
        <dbReference type="UniProtKB" id="P36836"/>
    </source>
</evidence>
<evidence type="ECO:0000250" key="2">
    <source>
        <dbReference type="UniProtKB" id="P46059"/>
    </source>
</evidence>
<evidence type="ECO:0000250" key="3">
    <source>
        <dbReference type="UniProtKB" id="Q9JIP7"/>
    </source>
</evidence>
<evidence type="ECO:0000255" key="4"/>
<evidence type="ECO:0000303" key="5">
    <source ref="1"/>
</evidence>
<evidence type="ECO:0000305" key="6"/>
<protein>
    <recommendedName>
        <fullName>Solute carrier family 15 member 1</fullName>
    </recommendedName>
    <alternativeName>
        <fullName evidence="5">Intestinal H(+)/peptide cotransporter</fullName>
    </alternativeName>
    <alternativeName>
        <fullName evidence="5">Oligopeptide transporter, small intestine isoform</fullName>
    </alternativeName>
    <alternativeName>
        <fullName evidence="5">Peptide transporter 1</fullName>
    </alternativeName>
</protein>
<sequence>MGMSKSYGCFGYPLSIFFIVVNEFCERFSYYGMRALLILYFRRFIGWDDNLSTAIYHTFVALCYLTPILGALIADSWLGKFKTIVSLSIVYTIGQAVTAVSSINDLTDYNKDGTPDNLSVHVALSMIGLALIALGTGGIKPCVSAFGGDQFEEGQEKQRNRFFSIFYLAINAGSLISTIVTPMLRVHECGIYSQKACYPLAFGVPAALMAVSLIVFVIGSGMYKKFQPQGNVMGKVVKCIGFALKNRFRHRSKQFPKREHWLDWAKEKYDERLISQIKMVTKVMFLYIPLPMFWALFDQQGSRWTLQATAMSGKIGLLEVQPDQMQTVNAILIVVMVPIMDAVVYPLIAKCGFNFTSLKRMTVGMFLASMAFVMAAIVQLEIDKTLPVFPKQNEVQIKVLNIGNGAMNVSFPGAVVTVSQMSQSDGFMTFDVDKLTSINISSTGSPVIPVTYNFEQGHRHTLLVWAPNNYRVVKDGLNQKPEKGENGIRFINSLNESLNITMGDKVYVNVTSHNASEYQFFSLGTKNITISSTQQISQNCTKVLQSSNLEFGSAYTYVIGTQSTGCPELHMFEDISPNTVNMALQIPQYFLITCGEVVFSVTGLEFSYSQAPSNMKSVLQAGWLLTVAVGNIIVLIVAGAGQFSEQWAEYILFAALLLVVCVIFAIMARFYTYVNPAEIEAQFDDDEKKNLEKMNVYSTVTPVSQTQM</sequence>
<dbReference type="EMBL" id="AF461733">
    <property type="protein sequence ID" value="AAL67837.2"/>
    <property type="molecule type" value="mRNA"/>
</dbReference>
<dbReference type="RefSeq" id="NP_001003036.1">
    <property type="nucleotide sequence ID" value="NM_001003036.1"/>
</dbReference>
<dbReference type="SMR" id="Q8WMX5"/>
<dbReference type="FunCoup" id="Q8WMX5">
    <property type="interactions" value="54"/>
</dbReference>
<dbReference type="STRING" id="9615.ENSCAFP00000008446"/>
<dbReference type="GlyCosmos" id="Q8WMX5">
    <property type="glycosylation" value="10 sites, No reported glycans"/>
</dbReference>
<dbReference type="PaxDb" id="9612-ENSCAFP00000041042"/>
<dbReference type="GeneID" id="403561"/>
<dbReference type="KEGG" id="cfa:403561"/>
<dbReference type="CTD" id="6564"/>
<dbReference type="eggNOG" id="KOG1237">
    <property type="taxonomic scope" value="Eukaryota"/>
</dbReference>
<dbReference type="InParanoid" id="Q8WMX5"/>
<dbReference type="OrthoDB" id="205993at2759"/>
<dbReference type="Proteomes" id="UP000002254">
    <property type="component" value="Unplaced"/>
</dbReference>
<dbReference type="Proteomes" id="UP000694429">
    <property type="component" value="Unplaced"/>
</dbReference>
<dbReference type="Proteomes" id="UP000694542">
    <property type="component" value="Unplaced"/>
</dbReference>
<dbReference type="Proteomes" id="UP000805418">
    <property type="component" value="Unplaced"/>
</dbReference>
<dbReference type="GO" id="GO:0016324">
    <property type="term" value="C:apical plasma membrane"/>
    <property type="evidence" value="ECO:0000318"/>
    <property type="project" value="GO_Central"/>
</dbReference>
<dbReference type="GO" id="GO:0005886">
    <property type="term" value="C:plasma membrane"/>
    <property type="evidence" value="ECO:0000318"/>
    <property type="project" value="GO_Central"/>
</dbReference>
<dbReference type="GO" id="GO:0071916">
    <property type="term" value="F:dipeptide transmembrane transporter activity"/>
    <property type="evidence" value="ECO:0000247"/>
    <property type="project" value="UniProtKB"/>
</dbReference>
<dbReference type="GO" id="GO:0015333">
    <property type="term" value="F:peptide:proton symporter activity"/>
    <property type="evidence" value="ECO:0000247"/>
    <property type="project" value="UniProtKB"/>
</dbReference>
<dbReference type="GO" id="GO:0042937">
    <property type="term" value="F:tripeptide transmembrane transporter activity"/>
    <property type="evidence" value="ECO:0000247"/>
    <property type="project" value="UniProtKB"/>
</dbReference>
<dbReference type="GO" id="GO:0140206">
    <property type="term" value="P:dipeptide import across plasma membrane"/>
    <property type="evidence" value="ECO:0000250"/>
    <property type="project" value="UniProtKB"/>
</dbReference>
<dbReference type="GO" id="GO:0015031">
    <property type="term" value="P:protein transport"/>
    <property type="evidence" value="ECO:0007669"/>
    <property type="project" value="UniProtKB-KW"/>
</dbReference>
<dbReference type="FunFam" id="1.20.1250.20:FF:000049">
    <property type="entry name" value="Solute carrier family 15 member 2"/>
    <property type="match status" value="1"/>
</dbReference>
<dbReference type="FunFam" id="1.20.1250.20:FF:000205">
    <property type="entry name" value="Solute carrier family 15 oligopeptide transporter member 1"/>
    <property type="match status" value="1"/>
</dbReference>
<dbReference type="Gene3D" id="1.20.1250.20">
    <property type="entry name" value="MFS general substrate transporter like domains"/>
    <property type="match status" value="2"/>
</dbReference>
<dbReference type="InterPro" id="IPR036259">
    <property type="entry name" value="MFS_trans_sf"/>
</dbReference>
<dbReference type="InterPro" id="IPR004768">
    <property type="entry name" value="Oligopep_transport"/>
</dbReference>
<dbReference type="InterPro" id="IPR000109">
    <property type="entry name" value="POT_fam"/>
</dbReference>
<dbReference type="InterPro" id="IPR018456">
    <property type="entry name" value="PTR2_symporter_CS"/>
</dbReference>
<dbReference type="NCBIfam" id="TIGR00926">
    <property type="entry name" value="2A1704"/>
    <property type="match status" value="1"/>
</dbReference>
<dbReference type="PANTHER" id="PTHR11654">
    <property type="entry name" value="OLIGOPEPTIDE TRANSPORTER-RELATED"/>
    <property type="match status" value="1"/>
</dbReference>
<dbReference type="Pfam" id="PF00854">
    <property type="entry name" value="PTR2"/>
    <property type="match status" value="2"/>
</dbReference>
<dbReference type="SUPFAM" id="SSF103473">
    <property type="entry name" value="MFS general substrate transporter"/>
    <property type="match status" value="1"/>
</dbReference>
<dbReference type="PROSITE" id="PS01022">
    <property type="entry name" value="PTR2_1"/>
    <property type="match status" value="1"/>
</dbReference>
<dbReference type="PROSITE" id="PS01023">
    <property type="entry name" value="PTR2_2"/>
    <property type="match status" value="1"/>
</dbReference>
<comment type="function">
    <text evidence="1 2">Electrogenic proton-coupled amino-acid transporter that transports oligopeptides of 2 to 4 amino acids with a preference for dipeptides. Transports neutral and monovalently charged peptides with a proton to peptide stoichiometry of 1:1 or 2:1 (By similarity). Primarily responsible for the absorption of dietary di- and tripeptides from the small intestinal lumen (By similarity). Mediates transepithelial transport of muramyl and N-formylated bacterial dipeptides contributing to recognition of pathogenic bacteria by the mucosal immune system (By similarity).</text>
</comment>
<comment type="catalytic activity">
    <reaction evidence="2">
        <text>a dipeptide(out) + H(+)(out) = a dipeptide(in) + H(+)(in)</text>
        <dbReference type="Rhea" id="RHEA:64392"/>
        <dbReference type="ChEBI" id="CHEBI:15378"/>
        <dbReference type="ChEBI" id="CHEBI:90799"/>
    </reaction>
    <physiologicalReaction direction="left-to-right" evidence="2">
        <dbReference type="Rhea" id="RHEA:64393"/>
    </physiologicalReaction>
</comment>
<comment type="catalytic activity">
    <reaction evidence="2">
        <text>an L-amino acid tripeptide(out) + H(+)(out) = an L-amino acid tripeptide(in) + H(+)(in)</text>
        <dbReference type="Rhea" id="RHEA:64400"/>
        <dbReference type="ChEBI" id="CHEBI:15378"/>
        <dbReference type="ChEBI" id="CHEBI:155837"/>
    </reaction>
    <physiologicalReaction direction="left-to-right" evidence="2">
        <dbReference type="Rhea" id="RHEA:64401"/>
    </physiologicalReaction>
</comment>
<comment type="catalytic activity">
    <reaction evidence="2">
        <text>L-alanyl-L-lysine(out) + H(+)(out) = L-alanyl-L-lysine(in) + H(+)(in)</text>
        <dbReference type="Rhea" id="RHEA:72611"/>
        <dbReference type="ChEBI" id="CHEBI:15378"/>
        <dbReference type="ChEBI" id="CHEBI:192470"/>
    </reaction>
    <physiologicalReaction direction="left-to-right" evidence="2">
        <dbReference type="Rhea" id="RHEA:72612"/>
    </physiologicalReaction>
</comment>
<comment type="catalytic activity">
    <reaction evidence="2">
        <text>L-alanyl-L-proline(out) + H(+)(out) = L-alanyl-L-proline(in) + H(+)(in)</text>
        <dbReference type="Rhea" id="RHEA:64420"/>
        <dbReference type="ChEBI" id="CHEBI:15378"/>
        <dbReference type="ChEBI" id="CHEBI:155848"/>
    </reaction>
    <physiologicalReaction direction="left-to-right" evidence="2">
        <dbReference type="Rhea" id="RHEA:64421"/>
    </physiologicalReaction>
</comment>
<comment type="catalytic activity">
    <reaction evidence="2">
        <text>L-alanyl-L-valine(out) + H(+)(out) = L-alanyl-L-valine(in) + H(+)(in)</text>
        <dbReference type="Rhea" id="RHEA:72615"/>
        <dbReference type="ChEBI" id="CHEBI:15378"/>
        <dbReference type="ChEBI" id="CHEBI:192471"/>
    </reaction>
    <physiologicalReaction direction="left-to-right" evidence="1">
        <dbReference type="Rhea" id="RHEA:72616"/>
    </physiologicalReaction>
</comment>
<comment type="catalytic activity">
    <reaction evidence="1">
        <text>carnosine(out) + H(+)(out) = carnosine(in) + H(+)(in)</text>
        <dbReference type="Rhea" id="RHEA:64404"/>
        <dbReference type="ChEBI" id="CHEBI:15378"/>
        <dbReference type="ChEBI" id="CHEBI:57485"/>
    </reaction>
    <physiologicalReaction direction="left-to-right" evidence="1">
        <dbReference type="Rhea" id="RHEA:64405"/>
    </physiologicalReaction>
</comment>
<comment type="catalytic activity">
    <reaction evidence="1">
        <text>glycyl-L-glutamine(out) + H(+)(out) = glycyl-L-glutamine(in) + H(+)(in)</text>
        <dbReference type="Rhea" id="RHEA:71671"/>
        <dbReference type="ChEBI" id="CHEBI:15378"/>
        <dbReference type="ChEBI" id="CHEBI:74392"/>
    </reaction>
    <physiologicalReaction direction="left-to-right" evidence="1">
        <dbReference type="Rhea" id="RHEA:71672"/>
    </physiologicalReaction>
    <physiologicalReaction direction="right-to-left" evidence="1">
        <dbReference type="Rhea" id="RHEA:71673"/>
    </physiologicalReaction>
</comment>
<comment type="catalytic activity">
    <reaction evidence="1">
        <text>glycyl-L-leucine(out) + H(+)(out) = glycyl-L-leucine(in) + H(+)(in)</text>
        <dbReference type="Rhea" id="RHEA:71675"/>
        <dbReference type="ChEBI" id="CHEBI:15378"/>
        <dbReference type="ChEBI" id="CHEBI:143163"/>
    </reaction>
    <physiologicalReaction direction="left-to-right" evidence="1">
        <dbReference type="Rhea" id="RHEA:71676"/>
    </physiologicalReaction>
</comment>
<comment type="catalytic activity">
    <reaction evidence="2">
        <text>glycyl-L-proline(out) + H(+)(out) = glycyl-L-proline(in) + H(+)(in)</text>
        <dbReference type="Rhea" id="RHEA:64428"/>
        <dbReference type="ChEBI" id="CHEBI:15378"/>
        <dbReference type="ChEBI" id="CHEBI:73779"/>
    </reaction>
    <physiologicalReaction direction="left-to-right" evidence="2">
        <dbReference type="Rhea" id="RHEA:64429"/>
    </physiologicalReaction>
</comment>
<comment type="catalytic activity">
    <reaction evidence="2">
        <text>glycyl-sarcosine(out) + H(+)(out) = glycyl-sarcosine(in) + H(+)(in)</text>
        <dbReference type="Rhea" id="RHEA:64396"/>
        <dbReference type="ChEBI" id="CHEBI:15378"/>
        <dbReference type="ChEBI" id="CHEBI:155838"/>
    </reaction>
    <physiologicalReaction direction="left-to-right" evidence="2">
        <dbReference type="Rhea" id="RHEA:64397"/>
    </physiologicalReaction>
</comment>
<comment type="catalytic activity">
    <reaction evidence="1">
        <text>L-leucyl-L-leucine(out) + H(+)(out) = L-leucyl-L-leucine(in) + H(+)(in)</text>
        <dbReference type="Rhea" id="RHEA:71715"/>
        <dbReference type="ChEBI" id="CHEBI:15378"/>
        <dbReference type="ChEBI" id="CHEBI:191208"/>
    </reaction>
    <physiologicalReaction direction="left-to-right" evidence="1">
        <dbReference type="Rhea" id="RHEA:71716"/>
    </physiologicalReaction>
</comment>
<comment type="catalytic activity">
    <reaction evidence="2">
        <text>L-leucyl-L-proline(out) + H(+)(out) = L-leucyl-L-proline(in) + H(+)(in)</text>
        <dbReference type="Rhea" id="RHEA:64424"/>
        <dbReference type="ChEBI" id="CHEBI:15378"/>
        <dbReference type="ChEBI" id="CHEBI:155847"/>
    </reaction>
    <physiologicalReaction direction="left-to-right" evidence="2">
        <dbReference type="Rhea" id="RHEA:64425"/>
    </physiologicalReaction>
</comment>
<comment type="catalytic activity">
    <reaction evidence="1">
        <text>L-phenylalanyl-L-leucine(out) + H(+)(out) = L-phenylalanyl-L-leucine(in) + H(+)(in)</text>
        <dbReference type="Rhea" id="RHEA:71699"/>
        <dbReference type="ChEBI" id="CHEBI:15378"/>
        <dbReference type="ChEBI" id="CHEBI:190710"/>
    </reaction>
    <physiologicalReaction direction="left-to-right" evidence="1">
        <dbReference type="Rhea" id="RHEA:71700"/>
    </physiologicalReaction>
</comment>
<comment type="catalytic activity">
    <reaction evidence="1">
        <text>L-phenylalanyl-L-phenylalanine(out) + H(+)(out) = L-phenylalanyl-L-phenylalanine(in) + H(+)(in)</text>
        <dbReference type="Rhea" id="RHEA:71707"/>
        <dbReference type="ChEBI" id="CHEBI:15378"/>
        <dbReference type="ChEBI" id="CHEBI:191205"/>
    </reaction>
    <physiologicalReaction direction="left-to-right" evidence="1">
        <dbReference type="Rhea" id="RHEA:71708"/>
    </physiologicalReaction>
</comment>
<comment type="catalytic activity">
    <reaction evidence="1">
        <text>L-lysyl-glycine(out) + H(+)(out) = L-lysyl-glycine(in) + H(+)(in)</text>
        <dbReference type="Rhea" id="RHEA:71679"/>
        <dbReference type="ChEBI" id="CHEBI:15378"/>
        <dbReference type="ChEBI" id="CHEBI:191202"/>
    </reaction>
    <physiologicalReaction direction="left-to-right" evidence="1">
        <dbReference type="Rhea" id="RHEA:71680"/>
    </physiologicalReaction>
    <physiologicalReaction direction="right-to-left" evidence="1">
        <dbReference type="Rhea" id="RHEA:71681"/>
    </physiologicalReaction>
</comment>
<comment type="catalytic activity">
    <reaction evidence="1">
        <text>L-tyrosylglycine(out) + H(+)(out) = L-tyrosylglycine(in) + H(+)(in)</text>
        <dbReference type="Rhea" id="RHEA:71711"/>
        <dbReference type="ChEBI" id="CHEBI:15378"/>
        <dbReference type="ChEBI" id="CHEBI:191210"/>
    </reaction>
    <physiologicalReaction direction="left-to-right" evidence="1">
        <dbReference type="Rhea" id="RHEA:71712"/>
    </physiologicalReaction>
</comment>
<comment type="catalytic activity">
    <reaction evidence="1 2">
        <text>L-alanyl-L-aspartate(out) + 2 H(+)(out) = L-alanyl-L-aspartate(in) + 2 H(+)(in)</text>
        <dbReference type="Rhea" id="RHEA:71695"/>
        <dbReference type="ChEBI" id="CHEBI:15378"/>
        <dbReference type="ChEBI" id="CHEBI:74363"/>
    </reaction>
    <physiologicalReaction direction="left-to-right" evidence="1 2">
        <dbReference type="Rhea" id="RHEA:71696"/>
    </physiologicalReaction>
</comment>
<comment type="catalytic activity">
    <reaction evidence="1">
        <text>L-aspartyl-glycine(out) + 2 H(+)(out) = L-aspartyl-glycine(in) + 2 H(+)(in)</text>
        <dbReference type="Rhea" id="RHEA:71683"/>
        <dbReference type="ChEBI" id="CHEBI:15378"/>
        <dbReference type="ChEBI" id="CHEBI:191203"/>
    </reaction>
    <physiologicalReaction direction="left-to-right" evidence="1">
        <dbReference type="Rhea" id="RHEA:71684"/>
    </physiologicalReaction>
</comment>
<comment type="catalytic activity">
    <reaction evidence="1">
        <text>glycyl-L-aspartate(out) + 2 H(+)(out) = glycyl-L-aspartate(in) + 2 H(+)(in)</text>
        <dbReference type="Rhea" id="RHEA:71687"/>
        <dbReference type="ChEBI" id="CHEBI:15378"/>
        <dbReference type="ChEBI" id="CHEBI:191204"/>
    </reaction>
    <physiologicalReaction direction="left-to-right" evidence="1">
        <dbReference type="Rhea" id="RHEA:71688"/>
    </physiologicalReaction>
    <physiologicalReaction direction="right-to-left" evidence="1">
        <dbReference type="Rhea" id="RHEA:71689"/>
    </physiologicalReaction>
</comment>
<comment type="catalytic activity">
    <reaction evidence="1">
        <text>glycyl-L-glutamate(out) + 2 H(+)(out) = glycyl-L-glutamate(in) + 2 H(+)(in)</text>
        <dbReference type="Rhea" id="RHEA:71691"/>
        <dbReference type="ChEBI" id="CHEBI:15378"/>
        <dbReference type="ChEBI" id="CHEBI:73784"/>
    </reaction>
    <physiologicalReaction direction="left-to-right" evidence="1">
        <dbReference type="Rhea" id="RHEA:71692"/>
    </physiologicalReaction>
</comment>
<comment type="catalytic activity">
    <reaction evidence="1">
        <text>L-alanyl-L-leucyl-L-alanine(out) + H(+)(out) = L-alanyl-L-leucyl-L-alanine(in) + H(+)(in)</text>
        <dbReference type="Rhea" id="RHEA:71723"/>
        <dbReference type="ChEBI" id="CHEBI:15378"/>
        <dbReference type="ChEBI" id="CHEBI:191212"/>
    </reaction>
    <physiologicalReaction direction="left-to-right" evidence="1">
        <dbReference type="Rhea" id="RHEA:71724"/>
    </physiologicalReaction>
</comment>
<comment type="catalytic activity">
    <reaction evidence="2">
        <text>L-alanyl-L-prolylglycine(out) + H(+)(out) = L-alanyl-L-prolylglycine(in) + H(+)(in)</text>
        <dbReference type="Rhea" id="RHEA:64432"/>
        <dbReference type="ChEBI" id="CHEBI:15378"/>
        <dbReference type="ChEBI" id="CHEBI:155849"/>
    </reaction>
    <physiologicalReaction direction="left-to-right" evidence="2">
        <dbReference type="Rhea" id="RHEA:64433"/>
    </physiologicalReaction>
</comment>
<comment type="catalytic activity">
    <reaction evidence="2">
        <text>glycylglycyl-L-isoleucine(out) + H(+)(out) = glycylglycyl-L-isoleucine(in) + H(+)(in)</text>
        <dbReference type="Rhea" id="RHEA:64436"/>
        <dbReference type="ChEBI" id="CHEBI:15378"/>
        <dbReference type="ChEBI" id="CHEBI:155850"/>
    </reaction>
    <physiologicalReaction direction="left-to-right" evidence="2">
        <dbReference type="Rhea" id="RHEA:64437"/>
    </physiologicalReaction>
</comment>
<comment type="catalytic activity">
    <reaction evidence="2">
        <text>glycylglycyl-L-proline(out) + H(+)(out) = glycylglycyl-L-proline(in) + H(+)(in)</text>
        <dbReference type="Rhea" id="RHEA:64440"/>
        <dbReference type="ChEBI" id="CHEBI:15378"/>
        <dbReference type="ChEBI" id="CHEBI:155851"/>
    </reaction>
    <physiologicalReaction direction="left-to-right" evidence="2">
        <dbReference type="Rhea" id="RHEA:64441"/>
    </physiologicalReaction>
</comment>
<comment type="catalytic activity">
    <reaction evidence="1">
        <text>L-methionyl-L-phenylalanyl-L-methionine(out) + H(+)(out) = L-methionyl-L-phenylalanyl-L-methionine(in) + H(+)(in)</text>
        <dbReference type="Rhea" id="RHEA:71719"/>
        <dbReference type="ChEBI" id="CHEBI:15378"/>
        <dbReference type="ChEBI" id="CHEBI:191211"/>
    </reaction>
    <physiologicalReaction direction="left-to-right" evidence="1">
        <dbReference type="Rhea" id="RHEA:71720"/>
    </physiologicalReaction>
</comment>
<comment type="catalytic activity">
    <reaction evidence="2">
        <text>N-acetyl-D-muramoyl-L-alanyl-D-isoglutamine(out) + 2 H(+)(out) = N-acetyl-D-muramoyl-L-alanyl-D-isoglutamine(in) + 2 H(+)(in)</text>
        <dbReference type="Rhea" id="RHEA:64408"/>
        <dbReference type="ChEBI" id="CHEBI:15378"/>
        <dbReference type="ChEBI" id="CHEBI:155830"/>
    </reaction>
</comment>
<comment type="catalytic activity">
    <reaction evidence="2">
        <text>N(alpha)-formyl-L-methionyl-L-leucyl-L-phenylalanine(out) + 2 H(+)(out) = N(alpha)-formyl-L-methionyl-L-leucyl-L-phenylalanine(in) + 2 H(+)(in)</text>
        <dbReference type="Rhea" id="RHEA:75399"/>
        <dbReference type="ChEBI" id="CHEBI:15378"/>
        <dbReference type="ChEBI" id="CHEBI:194314"/>
    </reaction>
</comment>
<comment type="subunit">
    <text evidence="3">Interacts (via extracellular domain region) with trypsin.</text>
</comment>
<comment type="subcellular location">
    <subcellularLocation>
        <location evidence="2">Apical cell membrane</location>
        <topology evidence="4">Multi-pass membrane protein</topology>
    </subcellularLocation>
    <text evidence="2">Localized to the apical membrane of enterocytes.</text>
</comment>
<comment type="domain">
    <text evidence="3">The extracellular domain (ECD) region specifically binds trypsin.</text>
</comment>
<comment type="similarity">
    <text evidence="6">Belongs to the major facilitator superfamily. Proton-dependent oligopeptide transporter (POT/PTR) (TC 2.A.17) family.</text>
</comment>
<proteinExistence type="evidence at transcript level"/>
<reference key="1">
    <citation type="submission" date="2002-06" db="EMBL/GenBank/DDBJ databases">
        <title>Cloning, functional characterization, and substrate stimulation of canine PepT1 using Madin-Darby canine kidney cells.</title>
        <authorList>
            <person name="Woods C.A."/>
            <person name="Etienne N.M.P."/>
            <person name="Matthews A.D."/>
            <person name="Davenport G.M."/>
            <person name="Matthews J.C."/>
        </authorList>
    </citation>
    <scope>NUCLEOTIDE SEQUENCE [MRNA]</scope>
    <source>
        <strain>Cocker spaniel</strain>
        <tissue>Kidney</tissue>
    </source>
</reference>
<gene>
    <name type="primary">SLC15A1</name>
    <name evidence="5" type="synonym">PEPT1</name>
</gene>
<name>S15A1_CANLF</name>
<keyword id="KW-1003">Cell membrane</keyword>
<keyword id="KW-0325">Glycoprotein</keyword>
<keyword id="KW-0472">Membrane</keyword>
<keyword id="KW-0571">Peptide transport</keyword>
<keyword id="KW-0653">Protein transport</keyword>
<keyword id="KW-1185">Reference proteome</keyword>
<keyword id="KW-0769">Symport</keyword>
<keyword id="KW-0812">Transmembrane</keyword>
<keyword id="KW-1133">Transmembrane helix</keyword>
<keyword id="KW-0813">Transport</keyword>
<feature type="chain" id="PRO_0000064303" description="Solute carrier family 15 member 1">
    <location>
        <begin position="1"/>
        <end position="708"/>
    </location>
</feature>
<feature type="transmembrane region" description="Helical" evidence="4">
    <location>
        <begin position="1"/>
        <end position="21"/>
    </location>
</feature>
<feature type="topological domain" description="Extracellular" evidence="4">
    <location>
        <begin position="22"/>
        <end position="53"/>
    </location>
</feature>
<feature type="transmembrane region" description="Helical" evidence="4">
    <location>
        <begin position="54"/>
        <end position="74"/>
    </location>
</feature>
<feature type="topological domain" description="Cytoplasmic" evidence="4">
    <location>
        <begin position="75"/>
        <end position="82"/>
    </location>
</feature>
<feature type="transmembrane region" description="Helical" evidence="4">
    <location>
        <begin position="83"/>
        <end position="103"/>
    </location>
</feature>
<feature type="topological domain" description="Extracellular" evidence="4">
    <location>
        <begin position="104"/>
        <end position="118"/>
    </location>
</feature>
<feature type="transmembrane region" description="Helical" evidence="4">
    <location>
        <begin position="119"/>
        <end position="139"/>
    </location>
</feature>
<feature type="topological domain" description="Cytoplasmic" evidence="4">
    <location>
        <begin position="140"/>
        <end position="161"/>
    </location>
</feature>
<feature type="transmembrane region" description="Helical" evidence="4">
    <location>
        <begin position="162"/>
        <end position="182"/>
    </location>
</feature>
<feature type="topological domain" description="Extracellular" evidence="4">
    <location>
        <begin position="183"/>
        <end position="198"/>
    </location>
</feature>
<feature type="transmembrane region" description="Helical" evidence="4">
    <location>
        <begin position="199"/>
        <end position="219"/>
    </location>
</feature>
<feature type="topological domain" description="Cytoplasmic" evidence="4">
    <location>
        <begin position="220"/>
        <end position="276"/>
    </location>
</feature>
<feature type="transmembrane region" description="Helical" evidence="4">
    <location>
        <begin position="277"/>
        <end position="297"/>
    </location>
</feature>
<feature type="topological domain" description="Extracellular" evidence="4">
    <location>
        <begin position="298"/>
        <end position="327"/>
    </location>
</feature>
<feature type="transmembrane region" description="Helical" evidence="4">
    <location>
        <begin position="328"/>
        <end position="348"/>
    </location>
</feature>
<feature type="topological domain" description="Cytoplasmic" evidence="4">
    <location>
        <begin position="349"/>
        <end position="361"/>
    </location>
</feature>
<feature type="transmembrane region" description="Helical" evidence="4">
    <location>
        <begin position="362"/>
        <end position="382"/>
    </location>
</feature>
<feature type="topological domain" description="Extracellular" evidence="4">
    <location>
        <begin position="383"/>
        <end position="584"/>
    </location>
</feature>
<feature type="transmembrane region" description="Helical" evidence="4">
    <location>
        <begin position="585"/>
        <end position="605"/>
    </location>
</feature>
<feature type="topological domain" description="Cytoplasmic" evidence="4">
    <location>
        <begin position="606"/>
        <end position="619"/>
    </location>
</feature>
<feature type="transmembrane region" description="Helical" evidence="4">
    <location>
        <begin position="620"/>
        <end position="640"/>
    </location>
</feature>
<feature type="topological domain" description="Extracellular" evidence="4">
    <location>
        <begin position="641"/>
        <end position="645"/>
    </location>
</feature>
<feature type="transmembrane region" description="Helical" evidence="4">
    <location>
        <begin position="646"/>
        <end position="666"/>
    </location>
</feature>
<feature type="topological domain" description="Cytoplasmic" evidence="4">
    <location>
        <begin position="667"/>
        <end position="708"/>
    </location>
</feature>
<feature type="region of interest" description="Extracellular domain (ECD)" evidence="3">
    <location>
        <begin position="383"/>
        <end position="585"/>
    </location>
</feature>
<feature type="glycosylation site" description="N-linked (GlcNAc...) asparagine" evidence="4">
    <location>
        <position position="50"/>
    </location>
</feature>
<feature type="glycosylation site" description="N-linked (GlcNAc...) asparagine" evidence="4">
    <location>
        <position position="117"/>
    </location>
</feature>
<feature type="glycosylation site" description="N-linked (GlcNAc...) asparagine" evidence="4">
    <location>
        <position position="408"/>
    </location>
</feature>
<feature type="glycosylation site" description="N-linked (GlcNAc...) asparagine" evidence="4">
    <location>
        <position position="439"/>
    </location>
</feature>
<feature type="glycosylation site" description="N-linked (GlcNAc...) asparagine" evidence="4">
    <location>
        <position position="495"/>
    </location>
</feature>
<feature type="glycosylation site" description="N-linked (GlcNAc...) asparagine" evidence="4">
    <location>
        <position position="499"/>
    </location>
</feature>
<feature type="glycosylation site" description="N-linked (GlcNAc...) asparagine" evidence="4">
    <location>
        <position position="509"/>
    </location>
</feature>
<feature type="glycosylation site" description="N-linked (GlcNAc...) asparagine" evidence="4">
    <location>
        <position position="514"/>
    </location>
</feature>
<feature type="glycosylation site" description="N-linked (GlcNAc...) asparagine" evidence="4">
    <location>
        <position position="527"/>
    </location>
</feature>
<feature type="glycosylation site" description="N-linked (GlcNAc...) asparagine" evidence="4">
    <location>
        <position position="539"/>
    </location>
</feature>